<dbReference type="EMBL" id="CP000930">
    <property type="protein sequence ID" value="ABZ83964.1"/>
    <property type="molecule type" value="Genomic_DNA"/>
</dbReference>
<dbReference type="RefSeq" id="WP_012282480.1">
    <property type="nucleotide sequence ID" value="NC_010337.2"/>
</dbReference>
<dbReference type="SMR" id="B0TC65"/>
<dbReference type="STRING" id="498761.HM1_1387"/>
<dbReference type="KEGG" id="hmo:HM1_1387"/>
<dbReference type="eggNOG" id="COG0186">
    <property type="taxonomic scope" value="Bacteria"/>
</dbReference>
<dbReference type="HOGENOM" id="CLU_073626_1_0_9"/>
<dbReference type="OrthoDB" id="9811714at2"/>
<dbReference type="Proteomes" id="UP000008550">
    <property type="component" value="Chromosome"/>
</dbReference>
<dbReference type="GO" id="GO:0022627">
    <property type="term" value="C:cytosolic small ribosomal subunit"/>
    <property type="evidence" value="ECO:0007669"/>
    <property type="project" value="TreeGrafter"/>
</dbReference>
<dbReference type="GO" id="GO:0019843">
    <property type="term" value="F:rRNA binding"/>
    <property type="evidence" value="ECO:0007669"/>
    <property type="project" value="UniProtKB-UniRule"/>
</dbReference>
<dbReference type="GO" id="GO:0003735">
    <property type="term" value="F:structural constituent of ribosome"/>
    <property type="evidence" value="ECO:0007669"/>
    <property type="project" value="InterPro"/>
</dbReference>
<dbReference type="GO" id="GO:0006412">
    <property type="term" value="P:translation"/>
    <property type="evidence" value="ECO:0007669"/>
    <property type="project" value="UniProtKB-UniRule"/>
</dbReference>
<dbReference type="CDD" id="cd00364">
    <property type="entry name" value="Ribosomal_uS17"/>
    <property type="match status" value="1"/>
</dbReference>
<dbReference type="FunFam" id="2.40.50.140:FF:000123">
    <property type="entry name" value="30S ribosomal protein S17"/>
    <property type="match status" value="1"/>
</dbReference>
<dbReference type="Gene3D" id="2.40.50.140">
    <property type="entry name" value="Nucleic acid-binding proteins"/>
    <property type="match status" value="1"/>
</dbReference>
<dbReference type="HAMAP" id="MF_01345_B">
    <property type="entry name" value="Ribosomal_uS17_B"/>
    <property type="match status" value="1"/>
</dbReference>
<dbReference type="InterPro" id="IPR012340">
    <property type="entry name" value="NA-bd_OB-fold"/>
</dbReference>
<dbReference type="InterPro" id="IPR000266">
    <property type="entry name" value="Ribosomal_uS17"/>
</dbReference>
<dbReference type="InterPro" id="IPR019984">
    <property type="entry name" value="Ribosomal_uS17_bact/chlr"/>
</dbReference>
<dbReference type="InterPro" id="IPR019979">
    <property type="entry name" value="Ribosomal_uS17_CS"/>
</dbReference>
<dbReference type="NCBIfam" id="NF004123">
    <property type="entry name" value="PRK05610.1"/>
    <property type="match status" value="1"/>
</dbReference>
<dbReference type="NCBIfam" id="TIGR03635">
    <property type="entry name" value="uS17_bact"/>
    <property type="match status" value="1"/>
</dbReference>
<dbReference type="PANTHER" id="PTHR10744">
    <property type="entry name" value="40S RIBOSOMAL PROTEIN S11 FAMILY MEMBER"/>
    <property type="match status" value="1"/>
</dbReference>
<dbReference type="PANTHER" id="PTHR10744:SF1">
    <property type="entry name" value="SMALL RIBOSOMAL SUBUNIT PROTEIN US17M"/>
    <property type="match status" value="1"/>
</dbReference>
<dbReference type="Pfam" id="PF00366">
    <property type="entry name" value="Ribosomal_S17"/>
    <property type="match status" value="1"/>
</dbReference>
<dbReference type="PRINTS" id="PR00973">
    <property type="entry name" value="RIBOSOMALS17"/>
</dbReference>
<dbReference type="SUPFAM" id="SSF50249">
    <property type="entry name" value="Nucleic acid-binding proteins"/>
    <property type="match status" value="1"/>
</dbReference>
<dbReference type="PROSITE" id="PS00056">
    <property type="entry name" value="RIBOSOMAL_S17"/>
    <property type="match status" value="1"/>
</dbReference>
<feature type="chain" id="PRO_1000166483" description="Small ribosomal subunit protein uS17">
    <location>
        <begin position="1"/>
        <end position="87"/>
    </location>
</feature>
<evidence type="ECO:0000255" key="1">
    <source>
        <dbReference type="HAMAP-Rule" id="MF_01345"/>
    </source>
</evidence>
<evidence type="ECO:0000305" key="2"/>
<comment type="function">
    <text evidence="1">One of the primary rRNA binding proteins, it binds specifically to the 5'-end of 16S ribosomal RNA.</text>
</comment>
<comment type="subunit">
    <text evidence="1">Part of the 30S ribosomal subunit.</text>
</comment>
<comment type="similarity">
    <text evidence="1">Belongs to the universal ribosomal protein uS17 family.</text>
</comment>
<keyword id="KW-1185">Reference proteome</keyword>
<keyword id="KW-0687">Ribonucleoprotein</keyword>
<keyword id="KW-0689">Ribosomal protein</keyword>
<keyword id="KW-0694">RNA-binding</keyword>
<keyword id="KW-0699">rRNA-binding</keyword>
<protein>
    <recommendedName>
        <fullName evidence="1">Small ribosomal subunit protein uS17</fullName>
    </recommendedName>
    <alternativeName>
        <fullName evidence="2">30S ribosomal protein S17</fullName>
    </alternativeName>
</protein>
<accession>B0TC65</accession>
<name>RS17_HELMI</name>
<organism>
    <name type="scientific">Heliobacterium modesticaldum (strain ATCC 51547 / Ice1)</name>
    <dbReference type="NCBI Taxonomy" id="498761"/>
    <lineage>
        <taxon>Bacteria</taxon>
        <taxon>Bacillati</taxon>
        <taxon>Bacillota</taxon>
        <taxon>Clostridia</taxon>
        <taxon>Eubacteriales</taxon>
        <taxon>Heliobacteriaceae</taxon>
        <taxon>Heliomicrobium</taxon>
    </lineage>
</organism>
<sequence>MSERAERKTRIGKVTSNKMEKTVVVAVESRIQHPLYGRTVKKTKKFKAHDEENACQIGDVVEIMETRPLSKEKRWRVVRIVEKAVIV</sequence>
<reference key="1">
    <citation type="journal article" date="2008" name="J. Bacteriol.">
        <title>The genome of Heliobacterium modesticaldum, a phototrophic representative of the Firmicutes containing the simplest photosynthetic apparatus.</title>
        <authorList>
            <person name="Sattley W.M."/>
            <person name="Madigan M.T."/>
            <person name="Swingley W.D."/>
            <person name="Cheung P.C."/>
            <person name="Clocksin K.M."/>
            <person name="Conrad A.L."/>
            <person name="Dejesa L.C."/>
            <person name="Honchak B.M."/>
            <person name="Jung D.O."/>
            <person name="Karbach L.E."/>
            <person name="Kurdoglu A."/>
            <person name="Lahiri S."/>
            <person name="Mastrian S.D."/>
            <person name="Page L.E."/>
            <person name="Taylor H.L."/>
            <person name="Wang Z.T."/>
            <person name="Raymond J."/>
            <person name="Chen M."/>
            <person name="Blankenship R.E."/>
            <person name="Touchman J.W."/>
        </authorList>
    </citation>
    <scope>NUCLEOTIDE SEQUENCE [LARGE SCALE GENOMIC DNA]</scope>
    <source>
        <strain>ATCC 51547 / Ice1</strain>
    </source>
</reference>
<proteinExistence type="inferred from homology"/>
<gene>
    <name evidence="1" type="primary">rpsQ</name>
    <name type="ordered locus">Helmi_13390</name>
    <name type="ORF">HM1_1387</name>
</gene>